<dbReference type="EMBL" id="AE000516">
    <property type="protein sequence ID" value="AAK44232.1"/>
    <property type="molecule type" value="Genomic_DNA"/>
</dbReference>
<dbReference type="PIR" id="F70698">
    <property type="entry name" value="F70698"/>
</dbReference>
<dbReference type="RefSeq" id="WP_003400307.1">
    <property type="nucleotide sequence ID" value="NZ_KK341227.1"/>
</dbReference>
<dbReference type="BMRB" id="P9WJF2"/>
<dbReference type="SMR" id="P9WJF2"/>
<dbReference type="GeneID" id="45423967"/>
<dbReference type="KEGG" id="mtc:MT0010"/>
<dbReference type="PATRIC" id="fig|83331.31.peg.11"/>
<dbReference type="HOGENOM" id="CLU_1914740_0_0_11"/>
<dbReference type="Proteomes" id="UP000001020">
    <property type="component" value="Chromosome"/>
</dbReference>
<dbReference type="GO" id="GO:0005886">
    <property type="term" value="C:plasma membrane"/>
    <property type="evidence" value="ECO:0007669"/>
    <property type="project" value="UniProtKB-SubCell"/>
</dbReference>
<dbReference type="GO" id="GO:0051301">
    <property type="term" value="P:cell division"/>
    <property type="evidence" value="ECO:0007669"/>
    <property type="project" value="UniProtKB-UniRule"/>
</dbReference>
<dbReference type="GO" id="GO:0042546">
    <property type="term" value="P:cell wall biogenesis"/>
    <property type="evidence" value="ECO:0007669"/>
    <property type="project" value="UniProtKB-UniRule"/>
</dbReference>
<dbReference type="GO" id="GO:0008360">
    <property type="term" value="P:regulation of cell shape"/>
    <property type="evidence" value="ECO:0007669"/>
    <property type="project" value="UniProtKB-UniRule"/>
</dbReference>
<dbReference type="HAMAP" id="MF_00927">
    <property type="entry name" value="CwsA"/>
    <property type="match status" value="1"/>
</dbReference>
<dbReference type="InterPro" id="IPR024245">
    <property type="entry name" value="CwsA"/>
</dbReference>
<dbReference type="Pfam" id="PF10814">
    <property type="entry name" value="CwsA"/>
    <property type="match status" value="1"/>
</dbReference>
<comment type="function">
    <text evidence="1">Required for regulated cell division, cell wall synthesis and the maintenance of cell shape.</text>
</comment>
<comment type="subcellular location">
    <subcellularLocation>
        <location evidence="1">Cell membrane</location>
        <topology evidence="1">Single-pass membrane protein</topology>
    </subcellularLocation>
    <text evidence="1">Localizes to poles and midcell sites.</text>
</comment>
<comment type="similarity">
    <text evidence="1">Belongs to the CwsA family.</text>
</comment>
<feature type="chain" id="PRO_0000427840" description="Cell wall synthesis protein CwsA">
    <location>
        <begin position="1"/>
        <end position="145"/>
    </location>
</feature>
<feature type="transmembrane region" description="Helical" evidence="1">
    <location>
        <begin position="104"/>
        <end position="124"/>
    </location>
</feature>
<protein>
    <recommendedName>
        <fullName evidence="1">Cell wall synthesis protein CwsA</fullName>
    </recommendedName>
    <alternativeName>
        <fullName evidence="1">Cell wall synthesis and cell shape protein A</fullName>
    </alternativeName>
</protein>
<sequence>MSEQVETRLTPRERLTRGLAYSAVGPVDVTRGLLELGVGLGLQSARSTAAGLRRRYREGRLAREVAAAQETLAQELTAAQDVVANLPQALQDARTQRRSKHHLWIFAGIAAAILAGGAVAFSIVRRSSRPEPSPRPPSVEVQPRP</sequence>
<gene>
    <name evidence="1" type="primary">cwsA</name>
    <name type="ordered locus">MT0010</name>
</gene>
<name>CWSA_MYCTO</name>
<reference key="1">
    <citation type="journal article" date="2002" name="J. Bacteriol.">
        <title>Whole-genome comparison of Mycobacterium tuberculosis clinical and laboratory strains.</title>
        <authorList>
            <person name="Fleischmann R.D."/>
            <person name="Alland D."/>
            <person name="Eisen J.A."/>
            <person name="Carpenter L."/>
            <person name="White O."/>
            <person name="Peterson J.D."/>
            <person name="DeBoy R.T."/>
            <person name="Dodson R.J."/>
            <person name="Gwinn M.L."/>
            <person name="Haft D.H."/>
            <person name="Hickey E.K."/>
            <person name="Kolonay J.F."/>
            <person name="Nelson W.C."/>
            <person name="Umayam L.A."/>
            <person name="Ermolaeva M.D."/>
            <person name="Salzberg S.L."/>
            <person name="Delcher A."/>
            <person name="Utterback T.R."/>
            <person name="Weidman J.F."/>
            <person name="Khouri H.M."/>
            <person name="Gill J."/>
            <person name="Mikula A."/>
            <person name="Bishai W."/>
            <person name="Jacobs W.R. Jr."/>
            <person name="Venter J.C."/>
            <person name="Fraser C.M."/>
        </authorList>
    </citation>
    <scope>NUCLEOTIDE SEQUENCE [LARGE SCALE GENOMIC DNA]</scope>
    <source>
        <strain>CDC 1551 / Oshkosh</strain>
    </source>
</reference>
<keyword id="KW-0131">Cell cycle</keyword>
<keyword id="KW-0132">Cell division</keyword>
<keyword id="KW-1003">Cell membrane</keyword>
<keyword id="KW-0133">Cell shape</keyword>
<keyword id="KW-0472">Membrane</keyword>
<keyword id="KW-1185">Reference proteome</keyword>
<keyword id="KW-0812">Transmembrane</keyword>
<keyword id="KW-1133">Transmembrane helix</keyword>
<accession>P9WJF2</accession>
<accession>L0T2A0</accession>
<accession>P71577</accession>
<evidence type="ECO:0000255" key="1">
    <source>
        <dbReference type="HAMAP-Rule" id="MF_00927"/>
    </source>
</evidence>
<organism>
    <name type="scientific">Mycobacterium tuberculosis (strain CDC 1551 / Oshkosh)</name>
    <dbReference type="NCBI Taxonomy" id="83331"/>
    <lineage>
        <taxon>Bacteria</taxon>
        <taxon>Bacillati</taxon>
        <taxon>Actinomycetota</taxon>
        <taxon>Actinomycetes</taxon>
        <taxon>Mycobacteriales</taxon>
        <taxon>Mycobacteriaceae</taxon>
        <taxon>Mycobacterium</taxon>
        <taxon>Mycobacterium tuberculosis complex</taxon>
    </lineage>
</organism>
<proteinExistence type="inferred from homology"/>